<protein>
    <recommendedName>
        <fullName evidence="1">ATP phosphoribosyltransferase</fullName>
        <shortName evidence="1">ATP-PRT</shortName>
        <shortName evidence="1">ATP-PRTase</shortName>
        <ecNumber evidence="1">2.4.2.17</ecNumber>
    </recommendedName>
</protein>
<sequence length="299" mass="33413">MTDNTRLRIAMQKSGRLSDDSRELLARCGIKINLHTQRLIAMAENMPIDILRVRDDDIPCLVMDGVVDLGIIGENVLEEELLNRRAQGEDPRYFTLRRLDFGGCRLSLATPVDEAWDGPLSLNGKRIATSYPHLLKRYLDQKGISFKSCLLNGSVEVAPRAGLADAICDLVSTGATLEANGLREVEVIYRSKACLIQRDGEMEESKQQLIDKLLTRIQGVIQARESKYIMMHAPTERLDEVIALLPGAERPTILPLAGDQQRVAMHMVSSETLFWETMEKLKALGASSILVLPIEKMME</sequence>
<reference key="1">
    <citation type="journal article" date="2006" name="BMC Genomics">
        <title>Complete genome sequence of Shigella flexneri 5b and comparison with Shigella flexneri 2a.</title>
        <authorList>
            <person name="Nie H."/>
            <person name="Yang F."/>
            <person name="Zhang X."/>
            <person name="Yang J."/>
            <person name="Chen L."/>
            <person name="Wang J."/>
            <person name="Xiong Z."/>
            <person name="Peng J."/>
            <person name="Sun L."/>
            <person name="Dong J."/>
            <person name="Xue Y."/>
            <person name="Xu X."/>
            <person name="Chen S."/>
            <person name="Yao Z."/>
            <person name="Shen Y."/>
            <person name="Jin Q."/>
        </authorList>
    </citation>
    <scope>NUCLEOTIDE SEQUENCE [LARGE SCALE GENOMIC DNA]</scope>
    <source>
        <strain>8401</strain>
    </source>
</reference>
<gene>
    <name evidence="1" type="primary">hisG</name>
    <name type="ordered locus">SFV_2079</name>
</gene>
<evidence type="ECO:0000255" key="1">
    <source>
        <dbReference type="HAMAP-Rule" id="MF_00079"/>
    </source>
</evidence>
<comment type="function">
    <text evidence="1">Catalyzes the condensation of ATP and 5-phosphoribose 1-diphosphate to form N'-(5'-phosphoribosyl)-ATP (PR-ATP). Has a crucial role in the pathway because the rate of histidine biosynthesis seems to be controlled primarily by regulation of HisG enzymatic activity.</text>
</comment>
<comment type="catalytic activity">
    <reaction evidence="1">
        <text>1-(5-phospho-beta-D-ribosyl)-ATP + diphosphate = 5-phospho-alpha-D-ribose 1-diphosphate + ATP</text>
        <dbReference type="Rhea" id="RHEA:18473"/>
        <dbReference type="ChEBI" id="CHEBI:30616"/>
        <dbReference type="ChEBI" id="CHEBI:33019"/>
        <dbReference type="ChEBI" id="CHEBI:58017"/>
        <dbReference type="ChEBI" id="CHEBI:73183"/>
        <dbReference type="EC" id="2.4.2.17"/>
    </reaction>
</comment>
<comment type="cofactor">
    <cofactor evidence="1">
        <name>Mg(2+)</name>
        <dbReference type="ChEBI" id="CHEBI:18420"/>
    </cofactor>
</comment>
<comment type="activity regulation">
    <text evidence="1">Feedback inhibited by histidine.</text>
</comment>
<comment type="pathway">
    <text evidence="1">Amino-acid biosynthesis; L-histidine biosynthesis; L-histidine from 5-phospho-alpha-D-ribose 1-diphosphate: step 1/9.</text>
</comment>
<comment type="subunit">
    <text evidence="1">Equilibrium between an active dimeric form, an inactive hexameric form and higher aggregates. Interconversion between the various forms is largely reversible and is influenced by the natural substrates and inhibitors of the enzyme.</text>
</comment>
<comment type="subcellular location">
    <subcellularLocation>
        <location evidence="1">Cytoplasm</location>
    </subcellularLocation>
</comment>
<comment type="similarity">
    <text evidence="1">Belongs to the ATP phosphoribosyltransferase family. Long subfamily.</text>
</comment>
<dbReference type="EC" id="2.4.2.17" evidence="1"/>
<dbReference type="EMBL" id="CP000266">
    <property type="protein sequence ID" value="ABF04207.1"/>
    <property type="molecule type" value="Genomic_DNA"/>
</dbReference>
<dbReference type="RefSeq" id="WP_000131772.1">
    <property type="nucleotide sequence ID" value="NC_008258.1"/>
</dbReference>
<dbReference type="SMR" id="Q0T3A8"/>
<dbReference type="KEGG" id="sfv:SFV_2079"/>
<dbReference type="HOGENOM" id="CLU_038115_1_0_6"/>
<dbReference type="UniPathway" id="UPA00031">
    <property type="reaction ID" value="UER00006"/>
</dbReference>
<dbReference type="Proteomes" id="UP000000659">
    <property type="component" value="Chromosome"/>
</dbReference>
<dbReference type="GO" id="GO:0005737">
    <property type="term" value="C:cytoplasm"/>
    <property type="evidence" value="ECO:0007669"/>
    <property type="project" value="UniProtKB-SubCell"/>
</dbReference>
<dbReference type="GO" id="GO:0005524">
    <property type="term" value="F:ATP binding"/>
    <property type="evidence" value="ECO:0007669"/>
    <property type="project" value="UniProtKB-KW"/>
</dbReference>
<dbReference type="GO" id="GO:0003879">
    <property type="term" value="F:ATP phosphoribosyltransferase activity"/>
    <property type="evidence" value="ECO:0007669"/>
    <property type="project" value="UniProtKB-UniRule"/>
</dbReference>
<dbReference type="GO" id="GO:0000287">
    <property type="term" value="F:magnesium ion binding"/>
    <property type="evidence" value="ECO:0007669"/>
    <property type="project" value="UniProtKB-UniRule"/>
</dbReference>
<dbReference type="GO" id="GO:0000105">
    <property type="term" value="P:L-histidine biosynthetic process"/>
    <property type="evidence" value="ECO:0007669"/>
    <property type="project" value="UniProtKB-UniRule"/>
</dbReference>
<dbReference type="CDD" id="cd13592">
    <property type="entry name" value="PBP2_HisGL2"/>
    <property type="match status" value="1"/>
</dbReference>
<dbReference type="FunFam" id="3.30.70.120:FF:000002">
    <property type="entry name" value="ATP phosphoribosyltransferase"/>
    <property type="match status" value="1"/>
</dbReference>
<dbReference type="FunFam" id="3.40.190.10:FF:000008">
    <property type="entry name" value="ATP phosphoribosyltransferase"/>
    <property type="match status" value="1"/>
</dbReference>
<dbReference type="Gene3D" id="3.30.70.120">
    <property type="match status" value="1"/>
</dbReference>
<dbReference type="Gene3D" id="3.40.190.10">
    <property type="entry name" value="Periplasmic binding protein-like II"/>
    <property type="match status" value="2"/>
</dbReference>
<dbReference type="HAMAP" id="MF_00079">
    <property type="entry name" value="HisG_Long"/>
    <property type="match status" value="1"/>
</dbReference>
<dbReference type="InterPro" id="IPR020621">
    <property type="entry name" value="ATP-PRT_HisG_long"/>
</dbReference>
<dbReference type="InterPro" id="IPR013820">
    <property type="entry name" value="ATP_PRibTrfase_cat"/>
</dbReference>
<dbReference type="InterPro" id="IPR018198">
    <property type="entry name" value="ATP_PRibTrfase_CS"/>
</dbReference>
<dbReference type="InterPro" id="IPR001348">
    <property type="entry name" value="ATP_PRibTrfase_HisG"/>
</dbReference>
<dbReference type="InterPro" id="IPR013115">
    <property type="entry name" value="HisG_C"/>
</dbReference>
<dbReference type="InterPro" id="IPR011322">
    <property type="entry name" value="N-reg_PII-like_a/b"/>
</dbReference>
<dbReference type="InterPro" id="IPR015867">
    <property type="entry name" value="N-reg_PII/ATP_PRibTrfase_C"/>
</dbReference>
<dbReference type="NCBIfam" id="TIGR00070">
    <property type="entry name" value="hisG"/>
    <property type="match status" value="1"/>
</dbReference>
<dbReference type="NCBIfam" id="TIGR03455">
    <property type="entry name" value="HisG_C-term"/>
    <property type="match status" value="1"/>
</dbReference>
<dbReference type="PANTHER" id="PTHR21403:SF8">
    <property type="entry name" value="ATP PHOSPHORIBOSYLTRANSFERASE"/>
    <property type="match status" value="1"/>
</dbReference>
<dbReference type="PANTHER" id="PTHR21403">
    <property type="entry name" value="ATP PHOSPHORIBOSYLTRANSFERASE ATP-PRTASE"/>
    <property type="match status" value="1"/>
</dbReference>
<dbReference type="Pfam" id="PF01634">
    <property type="entry name" value="HisG"/>
    <property type="match status" value="1"/>
</dbReference>
<dbReference type="Pfam" id="PF08029">
    <property type="entry name" value="HisG_C"/>
    <property type="match status" value="1"/>
</dbReference>
<dbReference type="SUPFAM" id="SSF54913">
    <property type="entry name" value="GlnB-like"/>
    <property type="match status" value="1"/>
</dbReference>
<dbReference type="SUPFAM" id="SSF53850">
    <property type="entry name" value="Periplasmic binding protein-like II"/>
    <property type="match status" value="1"/>
</dbReference>
<dbReference type="PROSITE" id="PS01316">
    <property type="entry name" value="ATP_P_PHORIBOSYLTR"/>
    <property type="match status" value="1"/>
</dbReference>
<accession>Q0T3A8</accession>
<name>HIS1_SHIF8</name>
<feature type="chain" id="PRO_1000004508" description="ATP phosphoribosyltransferase">
    <location>
        <begin position="1"/>
        <end position="299"/>
    </location>
</feature>
<proteinExistence type="inferred from homology"/>
<organism>
    <name type="scientific">Shigella flexneri serotype 5b (strain 8401)</name>
    <dbReference type="NCBI Taxonomy" id="373384"/>
    <lineage>
        <taxon>Bacteria</taxon>
        <taxon>Pseudomonadati</taxon>
        <taxon>Pseudomonadota</taxon>
        <taxon>Gammaproteobacteria</taxon>
        <taxon>Enterobacterales</taxon>
        <taxon>Enterobacteriaceae</taxon>
        <taxon>Shigella</taxon>
    </lineage>
</organism>
<keyword id="KW-0028">Amino-acid biosynthesis</keyword>
<keyword id="KW-0067">ATP-binding</keyword>
<keyword id="KW-0963">Cytoplasm</keyword>
<keyword id="KW-0328">Glycosyltransferase</keyword>
<keyword id="KW-0368">Histidine biosynthesis</keyword>
<keyword id="KW-0460">Magnesium</keyword>
<keyword id="KW-0479">Metal-binding</keyword>
<keyword id="KW-0547">Nucleotide-binding</keyword>
<keyword id="KW-0808">Transferase</keyword>